<keyword id="KW-0275">Fatty acid biosynthesis</keyword>
<keyword id="KW-0276">Fatty acid metabolism</keyword>
<keyword id="KW-0408">Iron</keyword>
<keyword id="KW-0444">Lipid biosynthesis</keyword>
<keyword id="KW-0443">Lipid metabolism</keyword>
<keyword id="KW-0472">Membrane</keyword>
<keyword id="KW-0479">Metal-binding</keyword>
<keyword id="KW-0560">Oxidoreductase</keyword>
<keyword id="KW-0812">Transmembrane</keyword>
<keyword id="KW-1133">Transmembrane helix</keyword>
<name>AL10_ANELE</name>
<organism>
    <name type="scientific">Anemone leveillei</name>
    <name type="common">Windflower</name>
    <dbReference type="NCBI Taxonomy" id="212809"/>
    <lineage>
        <taxon>Eukaryota</taxon>
        <taxon>Viridiplantae</taxon>
        <taxon>Streptophyta</taxon>
        <taxon>Embryophyta</taxon>
        <taxon>Tracheophyta</taxon>
        <taxon>Spermatophyta</taxon>
        <taxon>Magnoliopsida</taxon>
        <taxon>Ranunculales</taxon>
        <taxon>Ranunculaceae</taxon>
        <taxon>Ranunculoideae</taxon>
        <taxon>Anemoneae</taxon>
        <taxon>Anemone</taxon>
    </lineage>
</organism>
<accession>P0DOW2</accession>
<gene>
    <name evidence="4" type="primary">AL10</name>
</gene>
<feature type="chain" id="PRO_0000438498" description="Acyl-CoA C20 Delta5-desaturase">
    <location>
        <begin position="1"/>
        <end position="312"/>
    </location>
</feature>
<feature type="transmembrane region" description="Helical" evidence="2">
    <location>
        <begin position="45"/>
        <end position="65"/>
    </location>
</feature>
<feature type="transmembrane region" description="Helical" evidence="2">
    <location>
        <begin position="69"/>
        <end position="89"/>
    </location>
</feature>
<feature type="transmembrane region" description="Helical" evidence="2">
    <location>
        <begin position="193"/>
        <end position="213"/>
    </location>
</feature>
<feature type="short sequence motif" description="Histidine box-1" evidence="1">
    <location>
        <begin position="90"/>
        <end position="95"/>
    </location>
</feature>
<feature type="short sequence motif" description="Histidine box-2" evidence="1">
    <location>
        <begin position="127"/>
        <end position="131"/>
    </location>
</feature>
<feature type="short sequence motif" description="Histidine box-3" evidence="1">
    <location>
        <begin position="259"/>
        <end position="263"/>
    </location>
</feature>
<feature type="binding site" evidence="1">
    <location>
        <position position="90"/>
    </location>
    <ligand>
        <name>Fe cation</name>
        <dbReference type="ChEBI" id="CHEBI:24875"/>
        <label>1</label>
    </ligand>
</feature>
<feature type="binding site" evidence="1">
    <location>
        <position position="95"/>
    </location>
    <ligand>
        <name>Fe cation</name>
        <dbReference type="ChEBI" id="CHEBI:24875"/>
        <label>1</label>
    </ligand>
</feature>
<feature type="binding site" evidence="1">
    <location>
        <position position="127"/>
    </location>
    <ligand>
        <name>Fe cation</name>
        <dbReference type="ChEBI" id="CHEBI:24875"/>
        <label>1</label>
    </ligand>
</feature>
<feature type="binding site" evidence="1">
    <location>
        <position position="130"/>
    </location>
    <ligand>
        <name>Fe cation</name>
        <dbReference type="ChEBI" id="CHEBI:24875"/>
        <label>2</label>
    </ligand>
</feature>
<feature type="binding site" evidence="1">
    <location>
        <position position="131"/>
    </location>
    <ligand>
        <name>Fe cation</name>
        <dbReference type="ChEBI" id="CHEBI:24875"/>
        <label>1</label>
    </ligand>
</feature>
<feature type="binding site" evidence="1">
    <location>
        <position position="230"/>
    </location>
    <ligand>
        <name>Fe cation</name>
        <dbReference type="ChEBI" id="CHEBI:24875"/>
        <label>2</label>
    </ligand>
</feature>
<feature type="binding site" evidence="1">
    <location>
        <position position="259"/>
    </location>
    <ligand>
        <name>Fe cation</name>
        <dbReference type="ChEBI" id="CHEBI:24875"/>
        <label>2</label>
    </ligand>
</feature>
<feature type="binding site" evidence="1">
    <location>
        <position position="262"/>
    </location>
    <ligand>
        <name>Fe cation</name>
        <dbReference type="ChEBI" id="CHEBI:24875"/>
        <label>1</label>
    </ligand>
</feature>
<feature type="binding site" evidence="1">
    <location>
        <position position="263"/>
    </location>
    <ligand>
        <name>Fe cation</name>
        <dbReference type="ChEBI" id="CHEBI:24875"/>
        <label>2</label>
    </ligand>
</feature>
<sequence length="312" mass="36952">MDLTSMAMQETTAAAEEDRLPCSEVPVKEKTKKITWVRKWNSTDVFHILFIGGLHVLCLFAPSTFSWKSFWVCFALYAICGVFGTTLSFHRNLTHRSFKLPKYLEYFFAYVGLHALQGDPVWWVSTHRYHHKYTDTYLDPHSPIEGFWFCHIFWLFDSKYIIEKCGRYENAGDLMKQSYYRFLERTFVYHVYLQAALLYLFGGFPFIVWGMAVRTILGFHLSWLVNSVCHRWGNRPWNTGDLSTNNWFIAMLTSGEGWHNNHHAFEYSARHGIEWWQIDTTWYIIKLLEYLGLATDIKVPSEIHKRKMSFKN</sequence>
<protein>
    <recommendedName>
        <fullName evidence="4">Acyl-CoA C20 Delta5-desaturase</fullName>
        <ecNumber evidence="3">1.14.19.37</ecNumber>
    </recommendedName>
    <alternativeName>
        <fullName evidence="4">Acyl-CoA 5-desaturase (non-methylene-interrupted)</fullName>
    </alternativeName>
    <alternativeName>
        <fullName evidence="5">Acyl-CoA 5-desaturase AL10</fullName>
    </alternativeName>
</protein>
<evidence type="ECO:0000250" key="1">
    <source>
        <dbReference type="UniProtKB" id="O00767"/>
    </source>
</evidence>
<evidence type="ECO:0000255" key="2"/>
<evidence type="ECO:0000269" key="3">
    <source>
    </source>
</evidence>
<evidence type="ECO:0000303" key="4">
    <source>
    </source>
</evidence>
<evidence type="ECO:0000305" key="5"/>
<reference key="1">
    <citation type="journal article" date="2007" name="Plant Physiol.">
        <title>Cloning and characterization of unusual fatty acid desaturases from Anemone leveillei: identification of an acyl-coenzyme A C20 Delta5-desaturase responsible for the synthesis of sciadonic acid.</title>
        <authorList>
            <person name="Sayanova O."/>
            <person name="Haslam R."/>
            <person name="Venegas Caleron M."/>
            <person name="Napier J.A."/>
        </authorList>
    </citation>
    <scope>NUCLEOTIDE SEQUENCE [GENOMIC DNA]</scope>
    <scope>FUNCTION</scope>
    <scope>CATALYTIC ACTIVITY</scope>
    <scope>PATHWAY</scope>
</reference>
<dbReference type="EC" id="1.14.19.37" evidence="3"/>
<dbReference type="SMR" id="P0DOW2"/>
<dbReference type="UniPathway" id="UPA00658"/>
<dbReference type="GO" id="GO:0005789">
    <property type="term" value="C:endoplasmic reticulum membrane"/>
    <property type="evidence" value="ECO:0007669"/>
    <property type="project" value="TreeGrafter"/>
</dbReference>
<dbReference type="GO" id="GO:0046872">
    <property type="term" value="F:metal ion binding"/>
    <property type="evidence" value="ECO:0007669"/>
    <property type="project" value="UniProtKB-KW"/>
</dbReference>
<dbReference type="GO" id="GO:0016717">
    <property type="term" value="F:oxidoreductase activity, acting on paired donors, with oxidation of a pair of donors resulting in the reduction of molecular oxygen to two molecules of water"/>
    <property type="evidence" value="ECO:0007669"/>
    <property type="project" value="InterPro"/>
</dbReference>
<dbReference type="GO" id="GO:0006636">
    <property type="term" value="P:unsaturated fatty acid biosynthetic process"/>
    <property type="evidence" value="ECO:0007669"/>
    <property type="project" value="UniProtKB-UniPathway"/>
</dbReference>
<dbReference type="GO" id="GO:0042761">
    <property type="term" value="P:very long-chain fatty acid biosynthetic process"/>
    <property type="evidence" value="ECO:0007669"/>
    <property type="project" value="TreeGrafter"/>
</dbReference>
<dbReference type="CDD" id="cd03505">
    <property type="entry name" value="Delta9-FADS-like"/>
    <property type="match status" value="1"/>
</dbReference>
<dbReference type="InterPro" id="IPR015876">
    <property type="entry name" value="Acyl-CoA_DS"/>
</dbReference>
<dbReference type="InterPro" id="IPR005804">
    <property type="entry name" value="FA_desaturase_dom"/>
</dbReference>
<dbReference type="PANTHER" id="PTHR11351">
    <property type="entry name" value="ACYL-COA DESATURASE"/>
    <property type="match status" value="1"/>
</dbReference>
<dbReference type="PANTHER" id="PTHR11351:SF75">
    <property type="entry name" value="ACYL-COA DESATURASE"/>
    <property type="match status" value="1"/>
</dbReference>
<dbReference type="Pfam" id="PF00487">
    <property type="entry name" value="FA_desaturase"/>
    <property type="match status" value="1"/>
</dbReference>
<dbReference type="PRINTS" id="PR00075">
    <property type="entry name" value="FACDDSATRASE"/>
</dbReference>
<proteinExistence type="evidence at protein level"/>
<comment type="function">
    <text evidence="3">Catalyzes the desaturation of 20:2Delta(11,14) and 20:3Delta(11,14,17) to generate sciadonic acid (20:3Delta(5,11,14)) and juniperonic acid (20:4Delta(5,11,14,17)).</text>
</comment>
<comment type="catalytic activity">
    <reaction evidence="3">
        <text>(11Z,14Z)-eicosadienoyl-CoA + AH2 + O2 = (5Z,11Z,14Z)-eicosatrienoyl-CoA + A + 2 H2O</text>
        <dbReference type="Rhea" id="RHEA:42160"/>
        <dbReference type="ChEBI" id="CHEBI:13193"/>
        <dbReference type="ChEBI" id="CHEBI:15377"/>
        <dbReference type="ChEBI" id="CHEBI:15379"/>
        <dbReference type="ChEBI" id="CHEBI:17499"/>
        <dbReference type="ChEBI" id="CHEBI:76410"/>
        <dbReference type="ChEBI" id="CHEBI:78663"/>
        <dbReference type="EC" id="1.14.19.37"/>
    </reaction>
</comment>
<comment type="catalytic activity">
    <reaction evidence="3">
        <text>(11Z,14Z,17Z)-eicosatrienoyl-CoA + AH2 + O2 = (5Z,11Z,14Z,17Z)-eicosatetraenoyl-CoA + A + 2 H2O</text>
        <dbReference type="Rhea" id="RHEA:42164"/>
        <dbReference type="ChEBI" id="CHEBI:13193"/>
        <dbReference type="ChEBI" id="CHEBI:15377"/>
        <dbReference type="ChEBI" id="CHEBI:15379"/>
        <dbReference type="ChEBI" id="CHEBI:17499"/>
        <dbReference type="ChEBI" id="CHEBI:74328"/>
        <dbReference type="ChEBI" id="CHEBI:78664"/>
        <dbReference type="EC" id="1.14.19.37"/>
    </reaction>
</comment>
<comment type="cofactor">
    <cofactor evidence="1">
        <name>Fe(2+)</name>
        <dbReference type="ChEBI" id="CHEBI:29033"/>
    </cofactor>
    <text evidence="1">Expected to bind 2 Fe(2+) ions per subunit.</text>
</comment>
<comment type="pathway">
    <text evidence="3">Lipid metabolism; polyunsaturated fatty acid biosynthesis.</text>
</comment>
<comment type="subcellular location">
    <subcellularLocation>
        <location evidence="2">Membrane</location>
        <topology evidence="2">Multi-pass membrane protein</topology>
    </subcellularLocation>
</comment>
<comment type="domain">
    <text evidence="1">The histidine box domains are involved in binding the catalytic metal ions.</text>
</comment>
<comment type="similarity">
    <text evidence="5">Belongs to the fatty acid desaturase type 1 family.</text>
</comment>